<protein>
    <recommendedName>
        <fullName>U6-agatoxin-Ao1a</fullName>
        <shortName>U6-AGTX-Ao1a</shortName>
    </recommendedName>
    <alternativeName>
        <fullName>AgorTX_A4</fullName>
    </alternativeName>
</protein>
<organism>
    <name type="scientific">Agelena orientalis</name>
    <name type="common">Funnel-web spider</name>
    <dbReference type="NCBI Taxonomy" id="293813"/>
    <lineage>
        <taxon>Eukaryota</taxon>
        <taxon>Metazoa</taxon>
        <taxon>Ecdysozoa</taxon>
        <taxon>Arthropoda</taxon>
        <taxon>Chelicerata</taxon>
        <taxon>Arachnida</taxon>
        <taxon>Araneae</taxon>
        <taxon>Araneomorphae</taxon>
        <taxon>Entelegynae</taxon>
        <taxon>Agelenidae</taxon>
        <taxon>Agelena</taxon>
    </lineage>
</organism>
<accession>Q5Y4W0</accession>
<proteinExistence type="evidence at transcript level"/>
<name>TXAG6_AGEOR</name>
<evidence type="ECO:0000250" key="1"/>
<evidence type="ECO:0000255" key="2"/>
<evidence type="ECO:0000305" key="3"/>
<sequence length="74" mass="8405">MRFYIAFFFLLLAADMALSFEIGNSEELERLSMVYGEVESERGCTHGSCENGETCCDGWRCRYTGRAVPFMCVP</sequence>
<feature type="signal peptide" evidence="2">
    <location>
        <begin position="1"/>
        <end position="19"/>
    </location>
</feature>
<feature type="propeptide" id="PRO_5000093651" evidence="2">
    <location>
        <begin position="20"/>
        <end position="30"/>
    </location>
</feature>
<feature type="chain" id="PRO_5000093652" description="U6-agatoxin-Ao1a">
    <location>
        <begin position="31"/>
        <end position="74"/>
    </location>
</feature>
<feature type="disulfide bond" evidence="3">
    <location>
        <begin position="44"/>
        <end position="56"/>
    </location>
</feature>
<feature type="disulfide bond" evidence="3">
    <location>
        <begin position="49"/>
        <end position="61"/>
    </location>
</feature>
<feature type="disulfide bond" evidence="3">
    <location>
        <begin position="55"/>
        <end position="72"/>
    </location>
</feature>
<keyword id="KW-1015">Disulfide bond</keyword>
<keyword id="KW-0960">Knottin</keyword>
<keyword id="KW-0964">Secreted</keyword>
<keyword id="KW-0732">Signal</keyword>
<keyword id="KW-0800">Toxin</keyword>
<reference key="1">
    <citation type="journal article" date="2005" name="Proteins">
        <title>A novel strategy for the identification of toxinlike structures in spider venom.</title>
        <authorList>
            <person name="Kozlov S.A."/>
            <person name="Malyavka A."/>
            <person name="McCutchen B."/>
            <person name="Lu A."/>
            <person name="Schepers E."/>
            <person name="Herrmann R."/>
            <person name="Grishin E.V."/>
        </authorList>
    </citation>
    <scope>NUCLEOTIDE SEQUENCE [MRNA]</scope>
    <source>
        <tissue>Venom gland</tissue>
    </source>
</reference>
<dbReference type="EMBL" id="AY681324">
    <property type="protein sequence ID" value="AAU93680.1"/>
    <property type="molecule type" value="mRNA"/>
</dbReference>
<dbReference type="ArachnoServer" id="AS000088">
    <property type="toxin name" value="U6-agatoxin-Ao1a"/>
</dbReference>
<dbReference type="GO" id="GO:0005576">
    <property type="term" value="C:extracellular region"/>
    <property type="evidence" value="ECO:0007669"/>
    <property type="project" value="UniProtKB-SubCell"/>
</dbReference>
<dbReference type="GO" id="GO:0090729">
    <property type="term" value="F:toxin activity"/>
    <property type="evidence" value="ECO:0007669"/>
    <property type="project" value="UniProtKB-KW"/>
</dbReference>
<comment type="subcellular location">
    <subcellularLocation>
        <location evidence="1">Secreted</location>
    </subcellularLocation>
</comment>
<comment type="tissue specificity">
    <text>Expressed by the venom gland.</text>
</comment>
<comment type="domain">
    <text evidence="3">The presence of a 'disulfide through disulfide knot' structurally defines this protein as a knottin.</text>
</comment>